<keyword id="KW-0067">ATP-binding</keyword>
<keyword id="KW-0436">Ligase</keyword>
<keyword id="KW-0460">Magnesium</keyword>
<keyword id="KW-0479">Metal-binding</keyword>
<keyword id="KW-0547">Nucleotide-binding</keyword>
<keyword id="KW-0816">Tricarboxylic acid cycle</keyword>
<reference key="1">
    <citation type="journal article" date="2008" name="Genome Res.">
        <title>Chlamydia trachomatis: genome sequence analysis of lymphogranuloma venereum isolates.</title>
        <authorList>
            <person name="Thomson N.R."/>
            <person name="Holden M.T.G."/>
            <person name="Carder C."/>
            <person name="Lennard N."/>
            <person name="Lockey S.J."/>
            <person name="Marsh P."/>
            <person name="Skipp P."/>
            <person name="O'Connor C.D."/>
            <person name="Goodhead I."/>
            <person name="Norbertzcak H."/>
            <person name="Harris B."/>
            <person name="Ormond D."/>
            <person name="Rance R."/>
            <person name="Quail M.A."/>
            <person name="Parkhill J."/>
            <person name="Stephens R.S."/>
            <person name="Clarke I.N."/>
        </authorList>
    </citation>
    <scope>NUCLEOTIDE SEQUENCE [LARGE SCALE GENOMIC DNA]</scope>
    <source>
        <strain>UCH-1/proctitis</strain>
    </source>
</reference>
<feature type="chain" id="PRO_1000129175" description="Succinate--CoA ligase [ADP-forming] subunit beta">
    <location>
        <begin position="1"/>
        <end position="386"/>
    </location>
</feature>
<feature type="domain" description="ATP-grasp" evidence="1">
    <location>
        <begin position="9"/>
        <end position="244"/>
    </location>
</feature>
<feature type="binding site" evidence="1">
    <location>
        <position position="46"/>
    </location>
    <ligand>
        <name>ATP</name>
        <dbReference type="ChEBI" id="CHEBI:30616"/>
    </ligand>
</feature>
<feature type="binding site" evidence="1">
    <location>
        <begin position="53"/>
        <end position="55"/>
    </location>
    <ligand>
        <name>ATP</name>
        <dbReference type="ChEBI" id="CHEBI:30616"/>
    </ligand>
</feature>
<feature type="binding site" evidence="1">
    <location>
        <position position="102"/>
    </location>
    <ligand>
        <name>ATP</name>
        <dbReference type="ChEBI" id="CHEBI:30616"/>
    </ligand>
</feature>
<feature type="binding site" evidence="1">
    <location>
        <position position="107"/>
    </location>
    <ligand>
        <name>ATP</name>
        <dbReference type="ChEBI" id="CHEBI:30616"/>
    </ligand>
</feature>
<feature type="binding site" evidence="1">
    <location>
        <position position="199"/>
    </location>
    <ligand>
        <name>Mg(2+)</name>
        <dbReference type="ChEBI" id="CHEBI:18420"/>
    </ligand>
</feature>
<feature type="binding site" evidence="1">
    <location>
        <position position="213"/>
    </location>
    <ligand>
        <name>Mg(2+)</name>
        <dbReference type="ChEBI" id="CHEBI:18420"/>
    </ligand>
</feature>
<feature type="binding site" evidence="1">
    <location>
        <position position="264"/>
    </location>
    <ligand>
        <name>substrate</name>
        <note>ligand shared with subunit alpha</note>
    </ligand>
</feature>
<feature type="binding site" evidence="1">
    <location>
        <begin position="321"/>
        <end position="323"/>
    </location>
    <ligand>
        <name>substrate</name>
        <note>ligand shared with subunit alpha</note>
    </ligand>
</feature>
<gene>
    <name evidence="1" type="primary">sucC</name>
    <name type="ordered locus">CTLon_0193</name>
</gene>
<comment type="function">
    <text evidence="1">Succinyl-CoA synthetase functions in the citric acid cycle (TCA), coupling the hydrolysis of succinyl-CoA to the synthesis of either ATP or GTP and thus represents the only step of substrate-level phosphorylation in the TCA. The beta subunit provides nucleotide specificity of the enzyme and binds the substrate succinate, while the binding sites for coenzyme A and phosphate are found in the alpha subunit.</text>
</comment>
<comment type="catalytic activity">
    <reaction evidence="1">
        <text>succinate + ATP + CoA = succinyl-CoA + ADP + phosphate</text>
        <dbReference type="Rhea" id="RHEA:17661"/>
        <dbReference type="ChEBI" id="CHEBI:30031"/>
        <dbReference type="ChEBI" id="CHEBI:30616"/>
        <dbReference type="ChEBI" id="CHEBI:43474"/>
        <dbReference type="ChEBI" id="CHEBI:57287"/>
        <dbReference type="ChEBI" id="CHEBI:57292"/>
        <dbReference type="ChEBI" id="CHEBI:456216"/>
        <dbReference type="EC" id="6.2.1.5"/>
    </reaction>
    <physiologicalReaction direction="right-to-left" evidence="1">
        <dbReference type="Rhea" id="RHEA:17663"/>
    </physiologicalReaction>
</comment>
<comment type="catalytic activity">
    <reaction evidence="1">
        <text>GTP + succinate + CoA = succinyl-CoA + GDP + phosphate</text>
        <dbReference type="Rhea" id="RHEA:22120"/>
        <dbReference type="ChEBI" id="CHEBI:30031"/>
        <dbReference type="ChEBI" id="CHEBI:37565"/>
        <dbReference type="ChEBI" id="CHEBI:43474"/>
        <dbReference type="ChEBI" id="CHEBI:57287"/>
        <dbReference type="ChEBI" id="CHEBI:57292"/>
        <dbReference type="ChEBI" id="CHEBI:58189"/>
    </reaction>
    <physiologicalReaction direction="right-to-left" evidence="1">
        <dbReference type="Rhea" id="RHEA:22122"/>
    </physiologicalReaction>
</comment>
<comment type="cofactor">
    <cofactor evidence="1">
        <name>Mg(2+)</name>
        <dbReference type="ChEBI" id="CHEBI:18420"/>
    </cofactor>
    <text evidence="1">Binds 1 Mg(2+) ion per subunit.</text>
</comment>
<comment type="pathway">
    <text evidence="1">Carbohydrate metabolism; tricarboxylic acid cycle; succinate from succinyl-CoA (ligase route): step 1/1.</text>
</comment>
<comment type="subunit">
    <text evidence="1">Heterotetramer of two alpha and two beta subunits.</text>
</comment>
<comment type="similarity">
    <text evidence="1">Belongs to the succinate/malate CoA ligase beta subunit family.</text>
</comment>
<dbReference type="EC" id="6.2.1.5" evidence="1"/>
<dbReference type="EMBL" id="AM884177">
    <property type="protein sequence ID" value="CAP06591.1"/>
    <property type="molecule type" value="Genomic_DNA"/>
</dbReference>
<dbReference type="RefSeq" id="WP_009873433.1">
    <property type="nucleotide sequence ID" value="NC_010280.2"/>
</dbReference>
<dbReference type="SMR" id="B0BAS9"/>
<dbReference type="KEGG" id="ctl:CTLon_0193"/>
<dbReference type="HOGENOM" id="CLU_037430_0_2_0"/>
<dbReference type="UniPathway" id="UPA00223">
    <property type="reaction ID" value="UER00999"/>
</dbReference>
<dbReference type="Proteomes" id="UP001154401">
    <property type="component" value="Chromosome"/>
</dbReference>
<dbReference type="GO" id="GO:0005829">
    <property type="term" value="C:cytosol"/>
    <property type="evidence" value="ECO:0007669"/>
    <property type="project" value="TreeGrafter"/>
</dbReference>
<dbReference type="GO" id="GO:0042709">
    <property type="term" value="C:succinate-CoA ligase complex"/>
    <property type="evidence" value="ECO:0007669"/>
    <property type="project" value="TreeGrafter"/>
</dbReference>
<dbReference type="GO" id="GO:0005524">
    <property type="term" value="F:ATP binding"/>
    <property type="evidence" value="ECO:0007669"/>
    <property type="project" value="UniProtKB-UniRule"/>
</dbReference>
<dbReference type="GO" id="GO:0000287">
    <property type="term" value="F:magnesium ion binding"/>
    <property type="evidence" value="ECO:0007669"/>
    <property type="project" value="UniProtKB-UniRule"/>
</dbReference>
<dbReference type="GO" id="GO:0004775">
    <property type="term" value="F:succinate-CoA ligase (ADP-forming) activity"/>
    <property type="evidence" value="ECO:0007669"/>
    <property type="project" value="UniProtKB-UniRule"/>
</dbReference>
<dbReference type="GO" id="GO:0004776">
    <property type="term" value="F:succinate-CoA ligase (GDP-forming) activity"/>
    <property type="evidence" value="ECO:0007669"/>
    <property type="project" value="RHEA"/>
</dbReference>
<dbReference type="GO" id="GO:0006104">
    <property type="term" value="P:succinyl-CoA metabolic process"/>
    <property type="evidence" value="ECO:0007669"/>
    <property type="project" value="TreeGrafter"/>
</dbReference>
<dbReference type="GO" id="GO:0006099">
    <property type="term" value="P:tricarboxylic acid cycle"/>
    <property type="evidence" value="ECO:0007669"/>
    <property type="project" value="UniProtKB-UniRule"/>
</dbReference>
<dbReference type="FunFam" id="3.30.470.20:FF:000002">
    <property type="entry name" value="Succinate--CoA ligase [ADP-forming] subunit beta"/>
    <property type="match status" value="1"/>
</dbReference>
<dbReference type="FunFam" id="3.40.50.261:FF:000019">
    <property type="entry name" value="Succinate--CoA ligase [ADP-forming] subunit beta"/>
    <property type="match status" value="1"/>
</dbReference>
<dbReference type="Gene3D" id="3.30.1490.20">
    <property type="entry name" value="ATP-grasp fold, A domain"/>
    <property type="match status" value="1"/>
</dbReference>
<dbReference type="Gene3D" id="3.30.470.20">
    <property type="entry name" value="ATP-grasp fold, B domain"/>
    <property type="match status" value="1"/>
</dbReference>
<dbReference type="Gene3D" id="3.40.50.261">
    <property type="entry name" value="Succinyl-CoA synthetase domains"/>
    <property type="match status" value="1"/>
</dbReference>
<dbReference type="HAMAP" id="MF_00558">
    <property type="entry name" value="Succ_CoA_beta"/>
    <property type="match status" value="1"/>
</dbReference>
<dbReference type="InterPro" id="IPR011761">
    <property type="entry name" value="ATP-grasp"/>
</dbReference>
<dbReference type="InterPro" id="IPR013650">
    <property type="entry name" value="ATP-grasp_succ-CoA_synth-type"/>
</dbReference>
<dbReference type="InterPro" id="IPR013815">
    <property type="entry name" value="ATP_grasp_subdomain_1"/>
</dbReference>
<dbReference type="InterPro" id="IPR017866">
    <property type="entry name" value="Succ-CoA_synthase_bsu_CS"/>
</dbReference>
<dbReference type="InterPro" id="IPR005811">
    <property type="entry name" value="SUCC_ACL_C"/>
</dbReference>
<dbReference type="InterPro" id="IPR005809">
    <property type="entry name" value="Succ_CoA_ligase-like_bsu"/>
</dbReference>
<dbReference type="InterPro" id="IPR016102">
    <property type="entry name" value="Succinyl-CoA_synth-like"/>
</dbReference>
<dbReference type="NCBIfam" id="NF001913">
    <property type="entry name" value="PRK00696.1"/>
    <property type="match status" value="1"/>
</dbReference>
<dbReference type="NCBIfam" id="TIGR01016">
    <property type="entry name" value="sucCoAbeta"/>
    <property type="match status" value="1"/>
</dbReference>
<dbReference type="PANTHER" id="PTHR11815:SF10">
    <property type="entry name" value="SUCCINATE--COA LIGASE [GDP-FORMING] SUBUNIT BETA, MITOCHONDRIAL"/>
    <property type="match status" value="1"/>
</dbReference>
<dbReference type="PANTHER" id="PTHR11815">
    <property type="entry name" value="SUCCINYL-COA SYNTHETASE BETA CHAIN"/>
    <property type="match status" value="1"/>
</dbReference>
<dbReference type="Pfam" id="PF08442">
    <property type="entry name" value="ATP-grasp_2"/>
    <property type="match status" value="1"/>
</dbReference>
<dbReference type="Pfam" id="PF00549">
    <property type="entry name" value="Ligase_CoA"/>
    <property type="match status" value="1"/>
</dbReference>
<dbReference type="PIRSF" id="PIRSF001554">
    <property type="entry name" value="SucCS_beta"/>
    <property type="match status" value="1"/>
</dbReference>
<dbReference type="SUPFAM" id="SSF56059">
    <property type="entry name" value="Glutathione synthetase ATP-binding domain-like"/>
    <property type="match status" value="1"/>
</dbReference>
<dbReference type="SUPFAM" id="SSF52210">
    <property type="entry name" value="Succinyl-CoA synthetase domains"/>
    <property type="match status" value="1"/>
</dbReference>
<dbReference type="PROSITE" id="PS50975">
    <property type="entry name" value="ATP_GRASP"/>
    <property type="match status" value="1"/>
</dbReference>
<dbReference type="PROSITE" id="PS01217">
    <property type="entry name" value="SUCCINYL_COA_LIG_3"/>
    <property type="match status" value="1"/>
</dbReference>
<name>SUCC_CHLTB</name>
<proteinExistence type="inferred from homology"/>
<sequence>MHLHEYQAKDLLTAYQLPIPPYHVATSVPEVEAAIQAEQWKAGVVKAQVHAGGRGKNGGVVIAHSPEDLLAAADKLLHMQFSSNQTAGLSLPVNKVLISPLVEIASEYYLAIVIDRKHRCPVIMLSKAGGVDIEEVAEKQPDQLLKMTLPSSGKIYGYQLRRIAKFMEWDQPIADQGNRIIRQLLQCFYEKDASLLEINPLVLTKDGSLVILDAKMTIDDNALYRHPELADCYDPSQENIRDVLAKQLGLSYIALDGTIGCLVNGAGLAMSTLDILKLYGGSAANFLDVGGSASEKQIQEAISLVLSDKSVRVLFIHIFGGIMDCAVVASGLVSAMQGQKETIPTVIRLEGTNVDKGKGMIINAGIPCEFVTSMSEGAELAVQLSR</sequence>
<accession>B0BAS9</accession>
<evidence type="ECO:0000255" key="1">
    <source>
        <dbReference type="HAMAP-Rule" id="MF_00558"/>
    </source>
</evidence>
<protein>
    <recommendedName>
        <fullName evidence="1">Succinate--CoA ligase [ADP-forming] subunit beta</fullName>
        <ecNumber evidence="1">6.2.1.5</ecNumber>
    </recommendedName>
    <alternativeName>
        <fullName evidence="1">Succinyl-CoA synthetase subunit beta</fullName>
        <shortName evidence="1">SCS-beta</shortName>
    </alternativeName>
</protein>
<organism>
    <name type="scientific">Chlamydia trachomatis serovar L2b (strain UCH-1/proctitis)</name>
    <dbReference type="NCBI Taxonomy" id="471473"/>
    <lineage>
        <taxon>Bacteria</taxon>
        <taxon>Pseudomonadati</taxon>
        <taxon>Chlamydiota</taxon>
        <taxon>Chlamydiia</taxon>
        <taxon>Chlamydiales</taxon>
        <taxon>Chlamydiaceae</taxon>
        <taxon>Chlamydia/Chlamydophila group</taxon>
        <taxon>Chlamydia</taxon>
    </lineage>
</organism>